<accession>Q986D2</accession>
<evidence type="ECO:0000255" key="1">
    <source>
        <dbReference type="HAMAP-Rule" id="MF_01398"/>
    </source>
</evidence>
<evidence type="ECO:0000256" key="2">
    <source>
        <dbReference type="SAM" id="MobiDB-lite"/>
    </source>
</evidence>
<protein>
    <recommendedName>
        <fullName evidence="1">ATP synthase subunit b 1</fullName>
    </recommendedName>
    <alternativeName>
        <fullName evidence="1">ATP synthase F(0) sector subunit b 1</fullName>
    </alternativeName>
    <alternativeName>
        <fullName evidence="1">ATPase subunit I 1</fullName>
    </alternativeName>
    <alternativeName>
        <fullName evidence="1">F-type ATPase subunit b 1</fullName>
        <shortName evidence="1">F-ATPase subunit b 1</shortName>
    </alternativeName>
</protein>
<name>ATPF1_RHILO</name>
<organism>
    <name type="scientific">Mesorhizobium japonicum (strain LMG 29417 / CECT 9101 / MAFF 303099)</name>
    <name type="common">Mesorhizobium loti (strain MAFF 303099)</name>
    <dbReference type="NCBI Taxonomy" id="266835"/>
    <lineage>
        <taxon>Bacteria</taxon>
        <taxon>Pseudomonadati</taxon>
        <taxon>Pseudomonadota</taxon>
        <taxon>Alphaproteobacteria</taxon>
        <taxon>Hyphomicrobiales</taxon>
        <taxon>Phyllobacteriaceae</taxon>
        <taxon>Mesorhizobium</taxon>
    </lineage>
</organism>
<sequence length="193" mass="20035">MFVTSAFAEETAPAVTGGDTHSGTGVPAEAHGTFPPFDPATFPSQLLWLAITFGLFYLFLKKVAMPRIGGIIDVRNDRISQDLDQASKLKGEADAAVAAYEQELAEAKKNASSIGQQAADAAKAEAETARKKIEAALDEKLGEAEARISSIKANAMKEVGSIAEDTASAIVEALVGGKASKAEIAAAVKSVAR</sequence>
<keyword id="KW-0066">ATP synthesis</keyword>
<keyword id="KW-0997">Cell inner membrane</keyword>
<keyword id="KW-1003">Cell membrane</keyword>
<keyword id="KW-0138">CF(0)</keyword>
<keyword id="KW-0375">Hydrogen ion transport</keyword>
<keyword id="KW-0406">Ion transport</keyword>
<keyword id="KW-0472">Membrane</keyword>
<keyword id="KW-0812">Transmembrane</keyword>
<keyword id="KW-1133">Transmembrane helix</keyword>
<keyword id="KW-0813">Transport</keyword>
<gene>
    <name evidence="1" type="primary">atpF1</name>
    <name type="ordered locus">mlr7413</name>
</gene>
<proteinExistence type="inferred from homology"/>
<feature type="chain" id="PRO_0000368711" description="ATP synthase subunit b 1">
    <location>
        <begin position="1"/>
        <end position="193"/>
    </location>
</feature>
<feature type="transmembrane region" description="Helical" evidence="1">
    <location>
        <begin position="40"/>
        <end position="60"/>
    </location>
</feature>
<feature type="region of interest" description="Disordered" evidence="2">
    <location>
        <begin position="13"/>
        <end position="32"/>
    </location>
</feature>
<comment type="function">
    <text evidence="1">F(1)F(0) ATP synthase produces ATP from ADP in the presence of a proton or sodium gradient. F-type ATPases consist of two structural domains, F(1) containing the extramembraneous catalytic core and F(0) containing the membrane proton channel, linked together by a central stalk and a peripheral stalk. During catalysis, ATP synthesis in the catalytic domain of F(1) is coupled via a rotary mechanism of the central stalk subunits to proton translocation.</text>
</comment>
<comment type="function">
    <text evidence="1">Component of the F(0) channel, it forms part of the peripheral stalk, linking F(1) to F(0).</text>
</comment>
<comment type="subunit">
    <text evidence="1">F-type ATPases have 2 components, F(1) - the catalytic core - and F(0) - the membrane proton channel. F(1) has five subunits: alpha(3), beta(3), gamma(1), delta(1), epsilon(1). F(0) has three main subunits: a(1), b(2) and c(10-14). The alpha and beta chains form an alternating ring which encloses part of the gamma chain. F(1) is attached to F(0) by a central stalk formed by the gamma and epsilon chains, while a peripheral stalk is formed by the delta and b chains.</text>
</comment>
<comment type="subcellular location">
    <subcellularLocation>
        <location evidence="1">Cell inner membrane</location>
        <topology evidence="1">Single-pass membrane protein</topology>
    </subcellularLocation>
</comment>
<comment type="similarity">
    <text evidence="1">Belongs to the ATPase B chain family.</text>
</comment>
<dbReference type="EMBL" id="BA000012">
    <property type="protein sequence ID" value="BAB53521.1"/>
    <property type="molecule type" value="Genomic_DNA"/>
</dbReference>
<dbReference type="RefSeq" id="WP_010914828.1">
    <property type="nucleotide sequence ID" value="NC_002678.2"/>
</dbReference>
<dbReference type="SMR" id="Q986D2"/>
<dbReference type="KEGG" id="mlo:mlr7413"/>
<dbReference type="PATRIC" id="fig|266835.9.peg.5918"/>
<dbReference type="eggNOG" id="COG0711">
    <property type="taxonomic scope" value="Bacteria"/>
</dbReference>
<dbReference type="HOGENOM" id="CLU_079215_1_2_5"/>
<dbReference type="Proteomes" id="UP000000552">
    <property type="component" value="Chromosome"/>
</dbReference>
<dbReference type="GO" id="GO:0005886">
    <property type="term" value="C:plasma membrane"/>
    <property type="evidence" value="ECO:0007669"/>
    <property type="project" value="UniProtKB-SubCell"/>
</dbReference>
<dbReference type="GO" id="GO:0045259">
    <property type="term" value="C:proton-transporting ATP synthase complex"/>
    <property type="evidence" value="ECO:0007669"/>
    <property type="project" value="UniProtKB-KW"/>
</dbReference>
<dbReference type="GO" id="GO:0046933">
    <property type="term" value="F:proton-transporting ATP synthase activity, rotational mechanism"/>
    <property type="evidence" value="ECO:0007669"/>
    <property type="project" value="UniProtKB-UniRule"/>
</dbReference>
<dbReference type="GO" id="GO:0046961">
    <property type="term" value="F:proton-transporting ATPase activity, rotational mechanism"/>
    <property type="evidence" value="ECO:0007669"/>
    <property type="project" value="TreeGrafter"/>
</dbReference>
<dbReference type="CDD" id="cd06503">
    <property type="entry name" value="ATP-synt_Fo_b"/>
    <property type="match status" value="1"/>
</dbReference>
<dbReference type="HAMAP" id="MF_01398">
    <property type="entry name" value="ATP_synth_b_bprime"/>
    <property type="match status" value="1"/>
</dbReference>
<dbReference type="InterPro" id="IPR002146">
    <property type="entry name" value="ATP_synth_b/b'su_bac/chlpt"/>
</dbReference>
<dbReference type="InterPro" id="IPR050059">
    <property type="entry name" value="ATP_synthase_B_chain"/>
</dbReference>
<dbReference type="NCBIfam" id="NF006612">
    <property type="entry name" value="PRK09174.1"/>
    <property type="match status" value="1"/>
</dbReference>
<dbReference type="PANTHER" id="PTHR33445:SF1">
    <property type="entry name" value="ATP SYNTHASE SUBUNIT B"/>
    <property type="match status" value="1"/>
</dbReference>
<dbReference type="PANTHER" id="PTHR33445">
    <property type="entry name" value="ATP SYNTHASE SUBUNIT B', CHLOROPLASTIC"/>
    <property type="match status" value="1"/>
</dbReference>
<dbReference type="Pfam" id="PF00430">
    <property type="entry name" value="ATP-synt_B"/>
    <property type="match status" value="1"/>
</dbReference>
<reference key="1">
    <citation type="journal article" date="2000" name="DNA Res.">
        <title>Complete genome structure of the nitrogen-fixing symbiotic bacterium Mesorhizobium loti.</title>
        <authorList>
            <person name="Kaneko T."/>
            <person name="Nakamura Y."/>
            <person name="Sato S."/>
            <person name="Asamizu E."/>
            <person name="Kato T."/>
            <person name="Sasamoto S."/>
            <person name="Watanabe A."/>
            <person name="Idesawa K."/>
            <person name="Ishikawa A."/>
            <person name="Kawashima K."/>
            <person name="Kimura T."/>
            <person name="Kishida Y."/>
            <person name="Kiyokawa C."/>
            <person name="Kohara M."/>
            <person name="Matsumoto M."/>
            <person name="Matsuno A."/>
            <person name="Mochizuki Y."/>
            <person name="Nakayama S."/>
            <person name="Nakazaki N."/>
            <person name="Shimpo S."/>
            <person name="Sugimoto M."/>
            <person name="Takeuchi C."/>
            <person name="Yamada M."/>
            <person name="Tabata S."/>
        </authorList>
    </citation>
    <scope>NUCLEOTIDE SEQUENCE [LARGE SCALE GENOMIC DNA]</scope>
    <source>
        <strain>LMG 29417 / CECT 9101 / MAFF 303099</strain>
    </source>
</reference>